<feature type="chain" id="PRO_1000030518" description="D-alanine--D-alanine ligase">
    <location>
        <begin position="1"/>
        <end position="366"/>
    </location>
</feature>
<feature type="domain" description="ATP-grasp" evidence="2">
    <location>
        <begin position="149"/>
        <end position="358"/>
    </location>
</feature>
<feature type="binding site" evidence="2">
    <location>
        <begin position="185"/>
        <end position="240"/>
    </location>
    <ligand>
        <name>ATP</name>
        <dbReference type="ChEBI" id="CHEBI:30616"/>
    </ligand>
</feature>
<feature type="binding site" evidence="2">
    <location>
        <position position="311"/>
    </location>
    <ligand>
        <name>Mg(2+)</name>
        <dbReference type="ChEBI" id="CHEBI:18420"/>
        <label>1</label>
    </ligand>
</feature>
<feature type="binding site" evidence="2">
    <location>
        <position position="325"/>
    </location>
    <ligand>
        <name>Mg(2+)</name>
        <dbReference type="ChEBI" id="CHEBI:18420"/>
        <label>1</label>
    </ligand>
</feature>
<feature type="binding site" evidence="2">
    <location>
        <position position="325"/>
    </location>
    <ligand>
        <name>Mg(2+)</name>
        <dbReference type="ChEBI" id="CHEBI:18420"/>
        <label>2</label>
    </ligand>
</feature>
<feature type="binding site" evidence="2">
    <location>
        <position position="327"/>
    </location>
    <ligand>
        <name>Mg(2+)</name>
        <dbReference type="ChEBI" id="CHEBI:18420"/>
        <label>2</label>
    </ligand>
</feature>
<comment type="function">
    <text evidence="2">Cell wall formation.</text>
</comment>
<comment type="catalytic activity">
    <reaction evidence="2">
        <text>2 D-alanine + ATP = D-alanyl-D-alanine + ADP + phosphate + H(+)</text>
        <dbReference type="Rhea" id="RHEA:11224"/>
        <dbReference type="ChEBI" id="CHEBI:15378"/>
        <dbReference type="ChEBI" id="CHEBI:30616"/>
        <dbReference type="ChEBI" id="CHEBI:43474"/>
        <dbReference type="ChEBI" id="CHEBI:57416"/>
        <dbReference type="ChEBI" id="CHEBI:57822"/>
        <dbReference type="ChEBI" id="CHEBI:456216"/>
        <dbReference type="EC" id="6.3.2.4"/>
    </reaction>
</comment>
<comment type="cofactor">
    <cofactor evidence="1">
        <name>Mg(2+)</name>
        <dbReference type="ChEBI" id="CHEBI:18420"/>
    </cofactor>
    <cofactor evidence="1">
        <name>Mn(2+)</name>
        <dbReference type="ChEBI" id="CHEBI:29035"/>
    </cofactor>
    <text evidence="1">Binds 2 magnesium or manganese ions per subunit.</text>
</comment>
<comment type="pathway">
    <text evidence="2">Cell wall biogenesis; peptidoglycan biosynthesis.</text>
</comment>
<comment type="subcellular location">
    <subcellularLocation>
        <location evidence="2">Cytoplasm</location>
    </subcellularLocation>
</comment>
<comment type="similarity">
    <text evidence="2">Belongs to the D-alanine--D-alanine ligase family.</text>
</comment>
<accession>Q10X06</accession>
<proteinExistence type="inferred from homology"/>
<gene>
    <name evidence="2" type="primary">ddl</name>
    <name type="ordered locus">Tery_4217</name>
</gene>
<organism>
    <name type="scientific">Trichodesmium erythraeum (strain IMS101)</name>
    <dbReference type="NCBI Taxonomy" id="203124"/>
    <lineage>
        <taxon>Bacteria</taxon>
        <taxon>Bacillati</taxon>
        <taxon>Cyanobacteriota</taxon>
        <taxon>Cyanophyceae</taxon>
        <taxon>Oscillatoriophycideae</taxon>
        <taxon>Oscillatoriales</taxon>
        <taxon>Microcoleaceae</taxon>
        <taxon>Trichodesmium</taxon>
    </lineage>
</organism>
<protein>
    <recommendedName>
        <fullName evidence="2">D-alanine--D-alanine ligase</fullName>
        <ecNumber evidence="2">6.3.2.4</ecNumber>
    </recommendedName>
    <alternativeName>
        <fullName evidence="2">D-Ala-D-Ala ligase</fullName>
    </alternativeName>
    <alternativeName>
        <fullName evidence="2">D-alanylalanine synthetase</fullName>
    </alternativeName>
</protein>
<reference key="1">
    <citation type="journal article" date="2015" name="Proc. Natl. Acad. Sci. U.S.A.">
        <title>Trichodesmium genome maintains abundant, widespread noncoding DNA in situ, despite oligotrophic lifestyle.</title>
        <authorList>
            <person name="Walworth N."/>
            <person name="Pfreundt U."/>
            <person name="Nelson W.C."/>
            <person name="Mincer T."/>
            <person name="Heidelberg J.F."/>
            <person name="Fu F."/>
            <person name="Waterbury J.B."/>
            <person name="Glavina del Rio T."/>
            <person name="Goodwin L."/>
            <person name="Kyrpides N.C."/>
            <person name="Land M.L."/>
            <person name="Woyke T."/>
            <person name="Hutchins D.A."/>
            <person name="Hess W.R."/>
            <person name="Webb E.A."/>
        </authorList>
    </citation>
    <scope>NUCLEOTIDE SEQUENCE [LARGE SCALE GENOMIC DNA]</scope>
    <source>
        <strain>IMS101</strain>
    </source>
</reference>
<sequence length="366" mass="40267">MTKLRVGLLFGGCSGEHEVSIRSAKVIATALTKVQNKEKYELIPIYIQKNGLWQPSDFSQKVLNSDHPSLLQLTNENNHDLNTSLTQQSSSPLWQIPPQAAQVDVWFPILHGPNGEDGTIQGLLKLMQVPFVGSGVLGSAMGMDKIAMKIAFDHAGLPQVKYQVVTRSQIWSNSCVFPKLCDDIETTLEYPCFVKPANLGSSVGIAKVRSRSELETALDNAASYDRRIIVEAGVEAKELECAVLGNDMPKASIVGEITYNSDFYDYETKYTEGKADLHIPARVSEAIATKIKEMATQAFLAVDAAGLARVDFFYVEKTGEILINEINTMPGFTSSSMYPMLWEASGIPFSELVDTLIQLALERHSK</sequence>
<evidence type="ECO:0000250" key="1"/>
<evidence type="ECO:0000255" key="2">
    <source>
        <dbReference type="HAMAP-Rule" id="MF_00047"/>
    </source>
</evidence>
<dbReference type="EC" id="6.3.2.4" evidence="2"/>
<dbReference type="EMBL" id="CP000393">
    <property type="protein sequence ID" value="ABG53218.1"/>
    <property type="molecule type" value="Genomic_DNA"/>
</dbReference>
<dbReference type="RefSeq" id="WP_011613548.1">
    <property type="nucleotide sequence ID" value="NC_008312.1"/>
</dbReference>
<dbReference type="SMR" id="Q10X06"/>
<dbReference type="STRING" id="203124.Tery_4217"/>
<dbReference type="KEGG" id="ter:Tery_4217"/>
<dbReference type="eggNOG" id="COG1181">
    <property type="taxonomic scope" value="Bacteria"/>
</dbReference>
<dbReference type="HOGENOM" id="CLU_039268_0_0_3"/>
<dbReference type="OrthoDB" id="9813261at2"/>
<dbReference type="UniPathway" id="UPA00219"/>
<dbReference type="GO" id="GO:0005829">
    <property type="term" value="C:cytosol"/>
    <property type="evidence" value="ECO:0007669"/>
    <property type="project" value="TreeGrafter"/>
</dbReference>
<dbReference type="GO" id="GO:0005524">
    <property type="term" value="F:ATP binding"/>
    <property type="evidence" value="ECO:0007669"/>
    <property type="project" value="UniProtKB-KW"/>
</dbReference>
<dbReference type="GO" id="GO:0008716">
    <property type="term" value="F:D-alanine-D-alanine ligase activity"/>
    <property type="evidence" value="ECO:0007669"/>
    <property type="project" value="UniProtKB-UniRule"/>
</dbReference>
<dbReference type="GO" id="GO:0046872">
    <property type="term" value="F:metal ion binding"/>
    <property type="evidence" value="ECO:0007669"/>
    <property type="project" value="UniProtKB-KW"/>
</dbReference>
<dbReference type="GO" id="GO:0071555">
    <property type="term" value="P:cell wall organization"/>
    <property type="evidence" value="ECO:0007669"/>
    <property type="project" value="UniProtKB-KW"/>
</dbReference>
<dbReference type="GO" id="GO:0009252">
    <property type="term" value="P:peptidoglycan biosynthetic process"/>
    <property type="evidence" value="ECO:0007669"/>
    <property type="project" value="UniProtKB-UniRule"/>
</dbReference>
<dbReference type="GO" id="GO:0008360">
    <property type="term" value="P:regulation of cell shape"/>
    <property type="evidence" value="ECO:0007669"/>
    <property type="project" value="UniProtKB-KW"/>
</dbReference>
<dbReference type="FunFam" id="3.30.1490.20:FF:000007">
    <property type="entry name" value="D-alanine--D-alanine ligase"/>
    <property type="match status" value="1"/>
</dbReference>
<dbReference type="FunFam" id="3.30.470.20:FF:000008">
    <property type="entry name" value="D-alanine--D-alanine ligase"/>
    <property type="match status" value="1"/>
</dbReference>
<dbReference type="Gene3D" id="3.40.50.20">
    <property type="match status" value="1"/>
</dbReference>
<dbReference type="Gene3D" id="3.30.1490.20">
    <property type="entry name" value="ATP-grasp fold, A domain"/>
    <property type="match status" value="1"/>
</dbReference>
<dbReference type="Gene3D" id="3.30.470.20">
    <property type="entry name" value="ATP-grasp fold, B domain"/>
    <property type="match status" value="1"/>
</dbReference>
<dbReference type="HAMAP" id="MF_00047">
    <property type="entry name" value="Dala_Dala_lig"/>
    <property type="match status" value="1"/>
</dbReference>
<dbReference type="InterPro" id="IPR011761">
    <property type="entry name" value="ATP-grasp"/>
</dbReference>
<dbReference type="InterPro" id="IPR013815">
    <property type="entry name" value="ATP_grasp_subdomain_1"/>
</dbReference>
<dbReference type="InterPro" id="IPR000291">
    <property type="entry name" value="D-Ala_lig_Van_CS"/>
</dbReference>
<dbReference type="InterPro" id="IPR005905">
    <property type="entry name" value="D_ala_D_ala"/>
</dbReference>
<dbReference type="InterPro" id="IPR011095">
    <property type="entry name" value="Dala_Dala_lig_C"/>
</dbReference>
<dbReference type="InterPro" id="IPR011127">
    <property type="entry name" value="Dala_Dala_lig_N"/>
</dbReference>
<dbReference type="InterPro" id="IPR016185">
    <property type="entry name" value="PreATP-grasp_dom_sf"/>
</dbReference>
<dbReference type="NCBIfam" id="TIGR01205">
    <property type="entry name" value="D_ala_D_alaTIGR"/>
    <property type="match status" value="1"/>
</dbReference>
<dbReference type="NCBIfam" id="NF002378">
    <property type="entry name" value="PRK01372.1"/>
    <property type="match status" value="1"/>
</dbReference>
<dbReference type="NCBIfam" id="NF002528">
    <property type="entry name" value="PRK01966.1-4"/>
    <property type="match status" value="1"/>
</dbReference>
<dbReference type="PANTHER" id="PTHR23132">
    <property type="entry name" value="D-ALANINE--D-ALANINE LIGASE"/>
    <property type="match status" value="1"/>
</dbReference>
<dbReference type="PANTHER" id="PTHR23132:SF25">
    <property type="entry name" value="D-ALANINE--D-ALANINE LIGASE A"/>
    <property type="match status" value="1"/>
</dbReference>
<dbReference type="Pfam" id="PF07478">
    <property type="entry name" value="Dala_Dala_lig_C"/>
    <property type="match status" value="1"/>
</dbReference>
<dbReference type="Pfam" id="PF01820">
    <property type="entry name" value="Dala_Dala_lig_N"/>
    <property type="match status" value="1"/>
</dbReference>
<dbReference type="PIRSF" id="PIRSF039102">
    <property type="entry name" value="Ddl/VanB"/>
    <property type="match status" value="1"/>
</dbReference>
<dbReference type="SUPFAM" id="SSF56059">
    <property type="entry name" value="Glutathione synthetase ATP-binding domain-like"/>
    <property type="match status" value="1"/>
</dbReference>
<dbReference type="SUPFAM" id="SSF52440">
    <property type="entry name" value="PreATP-grasp domain"/>
    <property type="match status" value="1"/>
</dbReference>
<dbReference type="PROSITE" id="PS50975">
    <property type="entry name" value="ATP_GRASP"/>
    <property type="match status" value="1"/>
</dbReference>
<dbReference type="PROSITE" id="PS00843">
    <property type="entry name" value="DALA_DALA_LIGASE_1"/>
    <property type="match status" value="1"/>
</dbReference>
<dbReference type="PROSITE" id="PS00844">
    <property type="entry name" value="DALA_DALA_LIGASE_2"/>
    <property type="match status" value="1"/>
</dbReference>
<name>DDL_TRIEI</name>
<keyword id="KW-0067">ATP-binding</keyword>
<keyword id="KW-0133">Cell shape</keyword>
<keyword id="KW-0961">Cell wall biogenesis/degradation</keyword>
<keyword id="KW-0963">Cytoplasm</keyword>
<keyword id="KW-0436">Ligase</keyword>
<keyword id="KW-0460">Magnesium</keyword>
<keyword id="KW-0464">Manganese</keyword>
<keyword id="KW-0479">Metal-binding</keyword>
<keyword id="KW-0547">Nucleotide-binding</keyword>
<keyword id="KW-0573">Peptidoglycan synthesis</keyword>